<dbReference type="EMBL" id="CP000282">
    <property type="protein sequence ID" value="ABD80185.1"/>
    <property type="molecule type" value="Genomic_DNA"/>
</dbReference>
<dbReference type="RefSeq" id="WP_011467406.1">
    <property type="nucleotide sequence ID" value="NC_007912.1"/>
</dbReference>
<dbReference type="SMR" id="Q21M94"/>
<dbReference type="STRING" id="203122.Sde_0923"/>
<dbReference type="GeneID" id="98612609"/>
<dbReference type="KEGG" id="sde:Sde_0923"/>
<dbReference type="eggNOG" id="COG0222">
    <property type="taxonomic scope" value="Bacteria"/>
</dbReference>
<dbReference type="HOGENOM" id="CLU_086499_3_2_6"/>
<dbReference type="OrthoDB" id="9811748at2"/>
<dbReference type="Proteomes" id="UP000001947">
    <property type="component" value="Chromosome"/>
</dbReference>
<dbReference type="GO" id="GO:0022625">
    <property type="term" value="C:cytosolic large ribosomal subunit"/>
    <property type="evidence" value="ECO:0007669"/>
    <property type="project" value="TreeGrafter"/>
</dbReference>
<dbReference type="GO" id="GO:0003729">
    <property type="term" value="F:mRNA binding"/>
    <property type="evidence" value="ECO:0007669"/>
    <property type="project" value="TreeGrafter"/>
</dbReference>
<dbReference type="GO" id="GO:0003735">
    <property type="term" value="F:structural constituent of ribosome"/>
    <property type="evidence" value="ECO:0007669"/>
    <property type="project" value="InterPro"/>
</dbReference>
<dbReference type="GO" id="GO:0006412">
    <property type="term" value="P:translation"/>
    <property type="evidence" value="ECO:0007669"/>
    <property type="project" value="UniProtKB-UniRule"/>
</dbReference>
<dbReference type="CDD" id="cd00387">
    <property type="entry name" value="Ribosomal_L7_L12"/>
    <property type="match status" value="1"/>
</dbReference>
<dbReference type="FunFam" id="3.30.1390.10:FF:000001">
    <property type="entry name" value="50S ribosomal protein L7/L12"/>
    <property type="match status" value="1"/>
</dbReference>
<dbReference type="Gene3D" id="3.30.1390.10">
    <property type="match status" value="1"/>
</dbReference>
<dbReference type="Gene3D" id="1.20.5.710">
    <property type="entry name" value="Single helix bin"/>
    <property type="match status" value="1"/>
</dbReference>
<dbReference type="HAMAP" id="MF_00368">
    <property type="entry name" value="Ribosomal_bL12"/>
    <property type="match status" value="1"/>
</dbReference>
<dbReference type="InterPro" id="IPR000206">
    <property type="entry name" value="Ribosomal_bL12"/>
</dbReference>
<dbReference type="InterPro" id="IPR013823">
    <property type="entry name" value="Ribosomal_bL12_C"/>
</dbReference>
<dbReference type="InterPro" id="IPR014719">
    <property type="entry name" value="Ribosomal_bL12_C/ClpS-like"/>
</dbReference>
<dbReference type="InterPro" id="IPR008932">
    <property type="entry name" value="Ribosomal_bL12_oligo"/>
</dbReference>
<dbReference type="InterPro" id="IPR036235">
    <property type="entry name" value="Ribosomal_bL12_oligo_N_sf"/>
</dbReference>
<dbReference type="NCBIfam" id="TIGR00855">
    <property type="entry name" value="L12"/>
    <property type="match status" value="1"/>
</dbReference>
<dbReference type="PANTHER" id="PTHR45987">
    <property type="entry name" value="39S RIBOSOMAL PROTEIN L12"/>
    <property type="match status" value="1"/>
</dbReference>
<dbReference type="PANTHER" id="PTHR45987:SF4">
    <property type="entry name" value="LARGE RIBOSOMAL SUBUNIT PROTEIN BL12M"/>
    <property type="match status" value="1"/>
</dbReference>
<dbReference type="Pfam" id="PF00542">
    <property type="entry name" value="Ribosomal_L12"/>
    <property type="match status" value="1"/>
</dbReference>
<dbReference type="Pfam" id="PF16320">
    <property type="entry name" value="Ribosomal_L12_N"/>
    <property type="match status" value="1"/>
</dbReference>
<dbReference type="SUPFAM" id="SSF54736">
    <property type="entry name" value="ClpS-like"/>
    <property type="match status" value="1"/>
</dbReference>
<dbReference type="SUPFAM" id="SSF48300">
    <property type="entry name" value="Ribosomal protein L7/12, oligomerisation (N-terminal) domain"/>
    <property type="match status" value="1"/>
</dbReference>
<comment type="function">
    <text evidence="1">Forms part of the ribosomal stalk which helps the ribosome interact with GTP-bound translation factors. Is thus essential for accurate translation.</text>
</comment>
<comment type="subunit">
    <text evidence="1">Homodimer. Part of the ribosomal stalk of the 50S ribosomal subunit. Forms a multimeric L10(L12)X complex, where L10 forms an elongated spine to which 2 to 4 L12 dimers bind in a sequential fashion. Binds GTP-bound translation factors.</text>
</comment>
<comment type="similarity">
    <text evidence="1">Belongs to the bacterial ribosomal protein bL12 family.</text>
</comment>
<keyword id="KW-1185">Reference proteome</keyword>
<keyword id="KW-0687">Ribonucleoprotein</keyword>
<keyword id="KW-0689">Ribosomal protein</keyword>
<proteinExistence type="inferred from homology"/>
<reference key="1">
    <citation type="journal article" date="2008" name="PLoS Genet.">
        <title>Complete genome sequence of the complex carbohydrate-degrading marine bacterium, Saccharophagus degradans strain 2-40 T.</title>
        <authorList>
            <person name="Weiner R.M."/>
            <person name="Taylor L.E. II"/>
            <person name="Henrissat B."/>
            <person name="Hauser L."/>
            <person name="Land M."/>
            <person name="Coutinho P.M."/>
            <person name="Rancurel C."/>
            <person name="Saunders E.H."/>
            <person name="Longmire A.G."/>
            <person name="Zhang H."/>
            <person name="Bayer E.A."/>
            <person name="Gilbert H.J."/>
            <person name="Larimer F."/>
            <person name="Zhulin I.B."/>
            <person name="Ekborg N.A."/>
            <person name="Lamed R."/>
            <person name="Richardson P.M."/>
            <person name="Borovok I."/>
            <person name="Hutcheson S."/>
        </authorList>
    </citation>
    <scope>NUCLEOTIDE SEQUENCE [LARGE SCALE GENOMIC DNA]</scope>
    <source>
        <strain>2-40 / ATCC 43961 / DSM 17024</strain>
    </source>
</reference>
<gene>
    <name evidence="1" type="primary">rplL</name>
    <name type="ordered locus">Sde_0923</name>
</gene>
<accession>Q21M94</accession>
<feature type="chain" id="PRO_0000243488" description="Large ribosomal subunit protein bL12">
    <location>
        <begin position="1"/>
        <end position="126"/>
    </location>
</feature>
<organism>
    <name type="scientific">Saccharophagus degradans (strain 2-40 / ATCC 43961 / DSM 17024)</name>
    <dbReference type="NCBI Taxonomy" id="203122"/>
    <lineage>
        <taxon>Bacteria</taxon>
        <taxon>Pseudomonadati</taxon>
        <taxon>Pseudomonadota</taxon>
        <taxon>Gammaproteobacteria</taxon>
        <taxon>Cellvibrionales</taxon>
        <taxon>Cellvibrionaceae</taxon>
        <taxon>Saccharophagus</taxon>
    </lineage>
</organism>
<protein>
    <recommendedName>
        <fullName evidence="1">Large ribosomal subunit protein bL12</fullName>
    </recommendedName>
    <alternativeName>
        <fullName evidence="2">50S ribosomal protein L7/L12</fullName>
    </alternativeName>
</protein>
<evidence type="ECO:0000255" key="1">
    <source>
        <dbReference type="HAMAP-Rule" id="MF_00368"/>
    </source>
</evidence>
<evidence type="ECO:0000305" key="2"/>
<sequence length="126" mass="12664">MALSKEDILNAIAEMSVMDVVELVAAMEEKFGVSAAAAVAVAAPAAGGDAGGAAAEQTEFDVILASAGEKKVNVIKAVRGITGLGLKEAKELVDGAPSPIKEGVSKDDAEEAKKLLEEAGASVELK</sequence>
<name>RL7_SACD2</name>